<feature type="chain" id="PRO_1000122660" description="ATP phosphoribosyltransferase regulatory subunit">
    <location>
        <begin position="1"/>
        <end position="420"/>
    </location>
</feature>
<gene>
    <name evidence="1" type="primary">hisZ</name>
    <name type="ordered locus">BAA_1491</name>
</gene>
<accession>C3P500</accession>
<reference key="1">
    <citation type="submission" date="2009-04" db="EMBL/GenBank/DDBJ databases">
        <title>Genome sequence of Bacillus anthracis A0248.</title>
        <authorList>
            <person name="Dodson R.J."/>
            <person name="Munk A.C."/>
            <person name="Bruce D."/>
            <person name="Detter C."/>
            <person name="Tapia R."/>
            <person name="Sutton G."/>
            <person name="Sims D."/>
            <person name="Brettin T."/>
        </authorList>
    </citation>
    <scope>NUCLEOTIDE SEQUENCE [LARGE SCALE GENOMIC DNA]</scope>
    <source>
        <strain>A0248</strain>
    </source>
</reference>
<keyword id="KW-0028">Amino-acid biosynthesis</keyword>
<keyword id="KW-0963">Cytoplasm</keyword>
<keyword id="KW-0368">Histidine biosynthesis</keyword>
<proteinExistence type="inferred from homology"/>
<comment type="function">
    <text evidence="1">Required for the first step of histidine biosynthesis. May allow the feedback regulation of ATP phosphoribosyltransferase activity by histidine.</text>
</comment>
<comment type="pathway">
    <text evidence="1">Amino-acid biosynthesis; L-histidine biosynthesis; L-histidine from 5-phospho-alpha-D-ribose 1-diphosphate: step 1/9.</text>
</comment>
<comment type="subunit">
    <text evidence="1">Heteromultimer composed of HisG and HisZ subunits.</text>
</comment>
<comment type="subcellular location">
    <subcellularLocation>
        <location evidence="1">Cytoplasm</location>
    </subcellularLocation>
</comment>
<comment type="miscellaneous">
    <text>This function is generally fulfilled by the C-terminal part of HisG, which is missing in some bacteria such as this one.</text>
</comment>
<comment type="similarity">
    <text evidence="1">Belongs to the class-II aminoacyl-tRNA synthetase family. HisZ subfamily.</text>
</comment>
<evidence type="ECO:0000255" key="1">
    <source>
        <dbReference type="HAMAP-Rule" id="MF_00125"/>
    </source>
</evidence>
<dbReference type="EMBL" id="CP001598">
    <property type="protein sequence ID" value="ACQ49257.1"/>
    <property type="molecule type" value="Genomic_DNA"/>
</dbReference>
<dbReference type="RefSeq" id="WP_000170328.1">
    <property type="nucleotide sequence ID" value="NC_012659.1"/>
</dbReference>
<dbReference type="SMR" id="C3P500"/>
<dbReference type="GeneID" id="45021403"/>
<dbReference type="KEGG" id="bai:BAA_1491"/>
<dbReference type="HOGENOM" id="CLU_025113_0_0_9"/>
<dbReference type="UniPathway" id="UPA00031">
    <property type="reaction ID" value="UER00006"/>
</dbReference>
<dbReference type="GO" id="GO:0005737">
    <property type="term" value="C:cytoplasm"/>
    <property type="evidence" value="ECO:0007669"/>
    <property type="project" value="UniProtKB-SubCell"/>
</dbReference>
<dbReference type="GO" id="GO:0140096">
    <property type="term" value="F:catalytic activity, acting on a protein"/>
    <property type="evidence" value="ECO:0007669"/>
    <property type="project" value="UniProtKB-ARBA"/>
</dbReference>
<dbReference type="GO" id="GO:0004821">
    <property type="term" value="F:histidine-tRNA ligase activity"/>
    <property type="evidence" value="ECO:0007669"/>
    <property type="project" value="TreeGrafter"/>
</dbReference>
<dbReference type="GO" id="GO:0016740">
    <property type="term" value="F:transferase activity"/>
    <property type="evidence" value="ECO:0007669"/>
    <property type="project" value="UniProtKB-ARBA"/>
</dbReference>
<dbReference type="GO" id="GO:0006427">
    <property type="term" value="P:histidyl-tRNA aminoacylation"/>
    <property type="evidence" value="ECO:0007669"/>
    <property type="project" value="TreeGrafter"/>
</dbReference>
<dbReference type="GO" id="GO:0000105">
    <property type="term" value="P:L-histidine biosynthetic process"/>
    <property type="evidence" value="ECO:0007669"/>
    <property type="project" value="UniProtKB-UniRule"/>
</dbReference>
<dbReference type="CDD" id="cd00773">
    <property type="entry name" value="HisRS-like_core"/>
    <property type="match status" value="1"/>
</dbReference>
<dbReference type="FunFam" id="3.30.930.10:FF:000060">
    <property type="entry name" value="ATP phosphoribosyltransferase regulatory subunit"/>
    <property type="match status" value="1"/>
</dbReference>
<dbReference type="Gene3D" id="3.30.930.10">
    <property type="entry name" value="Bira Bifunctional Protein, Domain 2"/>
    <property type="match status" value="1"/>
</dbReference>
<dbReference type="HAMAP" id="MF_00125">
    <property type="entry name" value="HisZ"/>
    <property type="match status" value="1"/>
</dbReference>
<dbReference type="InterPro" id="IPR006195">
    <property type="entry name" value="aa-tRNA-synth_II"/>
</dbReference>
<dbReference type="InterPro" id="IPR045864">
    <property type="entry name" value="aa-tRNA-synth_II/BPL/LPL"/>
</dbReference>
<dbReference type="InterPro" id="IPR041715">
    <property type="entry name" value="HisRS-like_core"/>
</dbReference>
<dbReference type="InterPro" id="IPR004516">
    <property type="entry name" value="HisRS/HisZ"/>
</dbReference>
<dbReference type="InterPro" id="IPR004517">
    <property type="entry name" value="HisZ"/>
</dbReference>
<dbReference type="NCBIfam" id="TIGR00443">
    <property type="entry name" value="hisZ_biosyn_reg"/>
    <property type="match status" value="1"/>
</dbReference>
<dbReference type="NCBIfam" id="NF008938">
    <property type="entry name" value="PRK12292.1-6"/>
    <property type="match status" value="1"/>
</dbReference>
<dbReference type="PANTHER" id="PTHR43707:SF6">
    <property type="entry name" value="ATP PHOSPHORIBOSYLTRANSFERASE REGULATORY SUBUNIT"/>
    <property type="match status" value="1"/>
</dbReference>
<dbReference type="PANTHER" id="PTHR43707">
    <property type="entry name" value="HISTIDYL-TRNA SYNTHETASE"/>
    <property type="match status" value="1"/>
</dbReference>
<dbReference type="Pfam" id="PF13393">
    <property type="entry name" value="tRNA-synt_His"/>
    <property type="match status" value="1"/>
</dbReference>
<dbReference type="PIRSF" id="PIRSF001549">
    <property type="entry name" value="His-tRNA_synth"/>
    <property type="match status" value="1"/>
</dbReference>
<dbReference type="SUPFAM" id="SSF55681">
    <property type="entry name" value="Class II aaRS and biotin synthetases"/>
    <property type="match status" value="1"/>
</dbReference>
<dbReference type="PROSITE" id="PS50862">
    <property type="entry name" value="AA_TRNA_LIGASE_II"/>
    <property type="match status" value="1"/>
</dbReference>
<organism>
    <name type="scientific">Bacillus anthracis (strain A0248)</name>
    <dbReference type="NCBI Taxonomy" id="592021"/>
    <lineage>
        <taxon>Bacteria</taxon>
        <taxon>Bacillati</taxon>
        <taxon>Bacillota</taxon>
        <taxon>Bacilli</taxon>
        <taxon>Bacillales</taxon>
        <taxon>Bacillaceae</taxon>
        <taxon>Bacillus</taxon>
        <taxon>Bacillus cereus group</taxon>
    </lineage>
</organism>
<protein>
    <recommendedName>
        <fullName evidence="1">ATP phosphoribosyltransferase regulatory subunit</fullName>
    </recommendedName>
</protein>
<sequence length="420" mass="48830">MTKWKRANPNGTRDYLFEECTLIEEVEQKLRRTFLERGYEEIRTPTIEFYDVFAFQSRPIDEEKMYKFFDEKGRIIVLRPDMTIPLARVVGTQRCDTPLKVTYSGNVFRANESLAGKYNEIVQSGIEVIGIDNVRAEIECVISVIQSLQKLRVQSFTIEIGQVQLYKCIVKKLSIHEEEEKFLRTYIESKNYASLSNFIRDKKLDRCDETVKLLEKLPRLFGNLEVIEEAEKLASSNEMKMAITRVKEIYEAIEKLGYGSYISIDLGTIQHLDYYTGVIFKGYIYEIGEEIVSGGRYDELIGNFGEMLPAVGLAVQVNQIVKALQEQQEPYERKRIDIMIHYELNRLAEAERLRNLLQKDGKKVALSLFSNLNDTFQFARKNQIVTVVEAKSESLVEYVWKEKWVVQKEGETSCVTFKLR</sequence>
<name>HISZ_BACAA</name>